<comment type="function">
    <text evidence="1">Converts 2C-methyl-D-erythritol 2,4-cyclodiphosphate (ME-2,4cPP) into 1-hydroxy-2-methyl-2-(E)-butenyl 4-diphosphate.</text>
</comment>
<comment type="catalytic activity">
    <reaction evidence="1">
        <text>(2E)-4-hydroxy-3-methylbut-2-enyl diphosphate + oxidized [flavodoxin] + H2O + 2 H(+) = 2-C-methyl-D-erythritol 2,4-cyclic diphosphate + reduced [flavodoxin]</text>
        <dbReference type="Rhea" id="RHEA:43604"/>
        <dbReference type="Rhea" id="RHEA-COMP:10622"/>
        <dbReference type="Rhea" id="RHEA-COMP:10623"/>
        <dbReference type="ChEBI" id="CHEBI:15377"/>
        <dbReference type="ChEBI" id="CHEBI:15378"/>
        <dbReference type="ChEBI" id="CHEBI:57618"/>
        <dbReference type="ChEBI" id="CHEBI:58210"/>
        <dbReference type="ChEBI" id="CHEBI:58483"/>
        <dbReference type="ChEBI" id="CHEBI:128753"/>
        <dbReference type="EC" id="1.17.7.3"/>
    </reaction>
</comment>
<comment type="cofactor">
    <cofactor evidence="1">
        <name>[4Fe-4S] cluster</name>
        <dbReference type="ChEBI" id="CHEBI:49883"/>
    </cofactor>
    <text evidence="1">Binds 1 [4Fe-4S] cluster.</text>
</comment>
<comment type="pathway">
    <text evidence="1">Isoprenoid biosynthesis; isopentenyl diphosphate biosynthesis via DXP pathway; isopentenyl diphosphate from 1-deoxy-D-xylulose 5-phosphate: step 5/6.</text>
</comment>
<comment type="similarity">
    <text evidence="1">Belongs to the IspG family.</text>
</comment>
<gene>
    <name evidence="1" type="primary">ispG</name>
    <name type="ordered locus">RPB_0522</name>
</gene>
<organism>
    <name type="scientific">Rhodopseudomonas palustris (strain HaA2)</name>
    <dbReference type="NCBI Taxonomy" id="316058"/>
    <lineage>
        <taxon>Bacteria</taxon>
        <taxon>Pseudomonadati</taxon>
        <taxon>Pseudomonadota</taxon>
        <taxon>Alphaproteobacteria</taxon>
        <taxon>Hyphomicrobiales</taxon>
        <taxon>Nitrobacteraceae</taxon>
        <taxon>Rhodopseudomonas</taxon>
    </lineage>
</organism>
<accession>Q2J2S7</accession>
<dbReference type="EC" id="1.17.7.3" evidence="1"/>
<dbReference type="EMBL" id="CP000250">
    <property type="protein sequence ID" value="ABD05233.1"/>
    <property type="molecule type" value="Genomic_DNA"/>
</dbReference>
<dbReference type="RefSeq" id="WP_011439423.1">
    <property type="nucleotide sequence ID" value="NC_007778.1"/>
</dbReference>
<dbReference type="SMR" id="Q2J2S7"/>
<dbReference type="STRING" id="316058.RPB_0522"/>
<dbReference type="KEGG" id="rpb:RPB_0522"/>
<dbReference type="eggNOG" id="COG0821">
    <property type="taxonomic scope" value="Bacteria"/>
</dbReference>
<dbReference type="HOGENOM" id="CLU_042258_1_0_5"/>
<dbReference type="OrthoDB" id="9803214at2"/>
<dbReference type="UniPathway" id="UPA00056">
    <property type="reaction ID" value="UER00096"/>
</dbReference>
<dbReference type="Proteomes" id="UP000008809">
    <property type="component" value="Chromosome"/>
</dbReference>
<dbReference type="GO" id="GO:0051539">
    <property type="term" value="F:4 iron, 4 sulfur cluster binding"/>
    <property type="evidence" value="ECO:0007669"/>
    <property type="project" value="UniProtKB-UniRule"/>
</dbReference>
<dbReference type="GO" id="GO:0046429">
    <property type="term" value="F:4-hydroxy-3-methylbut-2-en-1-yl diphosphate synthase activity (ferredoxin)"/>
    <property type="evidence" value="ECO:0007669"/>
    <property type="project" value="UniProtKB-UniRule"/>
</dbReference>
<dbReference type="GO" id="GO:0141197">
    <property type="term" value="F:4-hydroxy-3-methylbut-2-enyl-diphosphate synthase activity (flavodoxin)"/>
    <property type="evidence" value="ECO:0007669"/>
    <property type="project" value="UniProtKB-EC"/>
</dbReference>
<dbReference type="GO" id="GO:0005506">
    <property type="term" value="F:iron ion binding"/>
    <property type="evidence" value="ECO:0007669"/>
    <property type="project" value="InterPro"/>
</dbReference>
<dbReference type="GO" id="GO:0019288">
    <property type="term" value="P:isopentenyl diphosphate biosynthetic process, methylerythritol 4-phosphate pathway"/>
    <property type="evidence" value="ECO:0007669"/>
    <property type="project" value="UniProtKB-UniRule"/>
</dbReference>
<dbReference type="GO" id="GO:0016114">
    <property type="term" value="P:terpenoid biosynthetic process"/>
    <property type="evidence" value="ECO:0007669"/>
    <property type="project" value="InterPro"/>
</dbReference>
<dbReference type="FunFam" id="3.30.413.10:FF:000012">
    <property type="entry name" value="4-hydroxy-3-methylbut-2-en-1-yl diphosphate synthase (flavodoxin)"/>
    <property type="match status" value="1"/>
</dbReference>
<dbReference type="Gene3D" id="3.20.20.20">
    <property type="entry name" value="Dihydropteroate synthase-like"/>
    <property type="match status" value="1"/>
</dbReference>
<dbReference type="Gene3D" id="3.30.413.10">
    <property type="entry name" value="Sulfite Reductase Hemoprotein, domain 1"/>
    <property type="match status" value="1"/>
</dbReference>
<dbReference type="HAMAP" id="MF_00159">
    <property type="entry name" value="IspG"/>
    <property type="match status" value="1"/>
</dbReference>
<dbReference type="InterPro" id="IPR011005">
    <property type="entry name" value="Dihydropteroate_synth-like_sf"/>
</dbReference>
<dbReference type="InterPro" id="IPR016425">
    <property type="entry name" value="IspG_bac"/>
</dbReference>
<dbReference type="InterPro" id="IPR004588">
    <property type="entry name" value="IspG_bac-typ"/>
</dbReference>
<dbReference type="InterPro" id="IPR045854">
    <property type="entry name" value="NO2/SO3_Rdtase_4Fe4S_sf"/>
</dbReference>
<dbReference type="NCBIfam" id="TIGR00612">
    <property type="entry name" value="ispG_gcpE"/>
    <property type="match status" value="1"/>
</dbReference>
<dbReference type="NCBIfam" id="NF001540">
    <property type="entry name" value="PRK00366.1"/>
    <property type="match status" value="1"/>
</dbReference>
<dbReference type="PANTHER" id="PTHR30454">
    <property type="entry name" value="4-HYDROXY-3-METHYLBUT-2-EN-1-YL DIPHOSPHATE SYNTHASE"/>
    <property type="match status" value="1"/>
</dbReference>
<dbReference type="PANTHER" id="PTHR30454:SF0">
    <property type="entry name" value="4-HYDROXY-3-METHYLBUT-2-EN-1-YL DIPHOSPHATE SYNTHASE (FERREDOXIN), CHLOROPLASTIC"/>
    <property type="match status" value="1"/>
</dbReference>
<dbReference type="Pfam" id="PF04551">
    <property type="entry name" value="GcpE"/>
    <property type="match status" value="1"/>
</dbReference>
<dbReference type="PIRSF" id="PIRSF004640">
    <property type="entry name" value="IspG"/>
    <property type="match status" value="1"/>
</dbReference>
<reference key="1">
    <citation type="submission" date="2006-01" db="EMBL/GenBank/DDBJ databases">
        <title>Complete sequence of Rhodopseudomonas palustris HaA2.</title>
        <authorList>
            <consortium name="US DOE Joint Genome Institute"/>
            <person name="Copeland A."/>
            <person name="Lucas S."/>
            <person name="Lapidus A."/>
            <person name="Barry K."/>
            <person name="Detter J.C."/>
            <person name="Glavina T."/>
            <person name="Hammon N."/>
            <person name="Israni S."/>
            <person name="Pitluck S."/>
            <person name="Chain P."/>
            <person name="Malfatti S."/>
            <person name="Shin M."/>
            <person name="Vergez L."/>
            <person name="Schmutz J."/>
            <person name="Larimer F."/>
            <person name="Land M."/>
            <person name="Hauser L."/>
            <person name="Pelletier D.A."/>
            <person name="Kyrpides N."/>
            <person name="Anderson I."/>
            <person name="Oda Y."/>
            <person name="Harwood C.S."/>
            <person name="Richardson P."/>
        </authorList>
    </citation>
    <scope>NUCLEOTIDE SEQUENCE [LARGE SCALE GENOMIC DNA]</scope>
    <source>
        <strain>HaA2</strain>
    </source>
</reference>
<sequence length="431" mass="45817">MNKLENPLQNDVAGPAPRHRTTQVMVGDIAVGGGAPIVVQSMTNTDTADIDGTIKQVAALARAGSEMVRITVDREEAAAAVPHIRDGLRKLGLTTPLIGDFHYIGHKLLAEYPACAEALDKYRINPGNVGFKAKRDTQFADIVEIAIKNNKAVRIGANWGSLDQELLTKLMDENAASAQPRDVRAVTREAMVQSALLSAARAEEIGLPKTKMVLSAKVSAVQDLIAVYQDLASRSDYAIHLGLTEAGMGSKGIVASSAALGILLQQGIGDTIRISLTPEPGGDRTLEVQVAQELLQTMGFRTFVPLVAACPGCGRTTSTTFQELARSIQDFIRVEMPSWKTRYPGVENLNVAVMGCIVNGPGESKHANIGISLPGTGESPAAPVFVDGEKFRTLRGENIAGDFKALVIDYIEQRYGAAPKPGAAQMVPAAE</sequence>
<name>ISPG_RHOP2</name>
<feature type="chain" id="PRO_1000011508" description="4-hydroxy-3-methylbut-2-en-1-yl diphosphate synthase (flavodoxin)">
    <location>
        <begin position="1"/>
        <end position="431"/>
    </location>
</feature>
<feature type="binding site" evidence="1">
    <location>
        <position position="310"/>
    </location>
    <ligand>
        <name>[4Fe-4S] cluster</name>
        <dbReference type="ChEBI" id="CHEBI:49883"/>
    </ligand>
</feature>
<feature type="binding site" evidence="1">
    <location>
        <position position="313"/>
    </location>
    <ligand>
        <name>[4Fe-4S] cluster</name>
        <dbReference type="ChEBI" id="CHEBI:49883"/>
    </ligand>
</feature>
<feature type="binding site" evidence="1">
    <location>
        <position position="356"/>
    </location>
    <ligand>
        <name>[4Fe-4S] cluster</name>
        <dbReference type="ChEBI" id="CHEBI:49883"/>
    </ligand>
</feature>
<feature type="binding site" evidence="1">
    <location>
        <position position="363"/>
    </location>
    <ligand>
        <name>[4Fe-4S] cluster</name>
        <dbReference type="ChEBI" id="CHEBI:49883"/>
    </ligand>
</feature>
<proteinExistence type="inferred from homology"/>
<evidence type="ECO:0000255" key="1">
    <source>
        <dbReference type="HAMAP-Rule" id="MF_00159"/>
    </source>
</evidence>
<protein>
    <recommendedName>
        <fullName evidence="1">4-hydroxy-3-methylbut-2-en-1-yl diphosphate synthase (flavodoxin)</fullName>
        <ecNumber evidence="1">1.17.7.3</ecNumber>
    </recommendedName>
    <alternativeName>
        <fullName evidence="1">1-hydroxy-2-methyl-2-(E)-butenyl 4-diphosphate synthase</fullName>
    </alternativeName>
</protein>
<keyword id="KW-0004">4Fe-4S</keyword>
<keyword id="KW-0408">Iron</keyword>
<keyword id="KW-0411">Iron-sulfur</keyword>
<keyword id="KW-0414">Isoprene biosynthesis</keyword>
<keyword id="KW-0479">Metal-binding</keyword>
<keyword id="KW-0560">Oxidoreductase</keyword>
<keyword id="KW-1185">Reference proteome</keyword>